<reference key="1">
    <citation type="journal article" date="1994" name="Nature">
        <title>2.2 Mb of contiguous nucleotide sequence from chromosome III of C. elegans.</title>
        <authorList>
            <person name="Wilson R."/>
            <person name="Ainscough R."/>
            <person name="Anderson K."/>
            <person name="Baynes C."/>
            <person name="Berks M."/>
            <person name="Bonfield J."/>
            <person name="Burton J."/>
            <person name="Connell M."/>
            <person name="Copsey T."/>
            <person name="Cooper J."/>
            <person name="Coulson A."/>
            <person name="Craxton M."/>
            <person name="Dear S."/>
            <person name="Du Z."/>
            <person name="Durbin R."/>
            <person name="Favello A."/>
            <person name="Fraser A."/>
            <person name="Fulton L."/>
            <person name="Gardner A."/>
            <person name="Green P."/>
            <person name="Hawkins T."/>
            <person name="Hillier L."/>
            <person name="Jier M."/>
            <person name="Johnston L."/>
            <person name="Jones M."/>
            <person name="Kershaw J."/>
            <person name="Kirsten J."/>
            <person name="Laisster N."/>
            <person name="Latreille P."/>
            <person name="Lightning J."/>
            <person name="Lloyd C."/>
            <person name="Mortimore B."/>
            <person name="O'Callaghan M."/>
            <person name="Parsons J."/>
            <person name="Percy C."/>
            <person name="Rifken L."/>
            <person name="Roopra A."/>
            <person name="Saunders D."/>
            <person name="Shownkeen R."/>
            <person name="Sims M."/>
            <person name="Smaldon N."/>
            <person name="Smith A."/>
            <person name="Smith M."/>
            <person name="Sonnhammer E."/>
            <person name="Staden R."/>
            <person name="Sulston J."/>
            <person name="Thierry-Mieg J."/>
            <person name="Thomas K."/>
            <person name="Vaudin M."/>
            <person name="Vaughan K."/>
            <person name="Waterston R."/>
            <person name="Watson A."/>
            <person name="Weinstock L."/>
            <person name="Wilkinson-Sproat J."/>
            <person name="Wohldman P."/>
        </authorList>
    </citation>
    <scope>NUCLEOTIDE SEQUENCE [LARGE SCALE GENOMIC DNA]</scope>
    <source>
        <strain>Bristol N2</strain>
    </source>
</reference>
<reference key="2">
    <citation type="journal article" date="1998" name="Science">
        <title>Genome sequence of the nematode C. elegans: a platform for investigating biology.</title>
        <authorList>
            <consortium name="The C. elegans sequencing consortium"/>
        </authorList>
    </citation>
    <scope>NUCLEOTIDE SEQUENCE [LARGE SCALE GENOMIC DNA]</scope>
    <source>
        <strain>Bristol N2</strain>
    </source>
</reference>
<keyword id="KW-1185">Reference proteome</keyword>
<dbReference type="EMBL" id="BX284603">
    <property type="protein sequence ID" value="CCD62132.1"/>
    <property type="molecule type" value="Genomic_DNA"/>
</dbReference>
<dbReference type="PIR" id="S44628">
    <property type="entry name" value="S44628"/>
</dbReference>
<dbReference type="RefSeq" id="NP_001367372.1">
    <property type="nucleotide sequence ID" value="NM_001379844.3"/>
</dbReference>
<dbReference type="RefSeq" id="NP_498910.1">
    <property type="nucleotide sequence ID" value="NM_066509.1"/>
</dbReference>
<dbReference type="SMR" id="P34404"/>
<dbReference type="FunCoup" id="P34404">
    <property type="interactions" value="267"/>
</dbReference>
<dbReference type="PaxDb" id="6239-F22B7.1"/>
<dbReference type="EnsemblMetazoa" id="F22B7.1.1">
    <property type="protein sequence ID" value="F22B7.1.1"/>
    <property type="gene ID" value="WBGene00017692"/>
</dbReference>
<dbReference type="GeneID" id="184811"/>
<dbReference type="UCSC" id="F22B7.1">
    <property type="organism name" value="c. elegans"/>
</dbReference>
<dbReference type="AGR" id="WB:WBGene00017692"/>
<dbReference type="WormBase" id="F22B7.1">
    <property type="protein sequence ID" value="CE54082"/>
    <property type="gene ID" value="WBGene00017692"/>
</dbReference>
<dbReference type="eggNOG" id="ENOG502SUTD">
    <property type="taxonomic scope" value="Eukaryota"/>
</dbReference>
<dbReference type="HOGENOM" id="CLU_811945_0_0_1"/>
<dbReference type="InParanoid" id="P34404"/>
<dbReference type="OrthoDB" id="5867312at2759"/>
<dbReference type="PRO" id="PR:P34404"/>
<dbReference type="Proteomes" id="UP000001940">
    <property type="component" value="Chromosome III"/>
</dbReference>
<dbReference type="Bgee" id="WBGene00017692">
    <property type="expression patterns" value="Expressed in larva and 4 other cell types or tissues"/>
</dbReference>
<organism>
    <name type="scientific">Caenorhabditis elegans</name>
    <dbReference type="NCBI Taxonomy" id="6239"/>
    <lineage>
        <taxon>Eukaryota</taxon>
        <taxon>Metazoa</taxon>
        <taxon>Ecdysozoa</taxon>
        <taxon>Nematoda</taxon>
        <taxon>Chromadorea</taxon>
        <taxon>Rhabditida</taxon>
        <taxon>Rhabditina</taxon>
        <taxon>Rhabditomorpha</taxon>
        <taxon>Rhabditoidea</taxon>
        <taxon>Rhabditidae</taxon>
        <taxon>Peloderinae</taxon>
        <taxon>Caenorhabditis</taxon>
    </lineage>
</organism>
<name>YLW1_CAEEL</name>
<proteinExistence type="predicted"/>
<sequence length="353" mass="41617">MKTPAILLLLFLFMMSLAQSDEEQSGKEPPEKDDVLVILAEDNSTLLNNNQTMYDPSSEEKESDKPKFNLLETYLPLFIFVLDLPTEDRETLKAYVKDKTYEKLKYVIDSKVKMNRNEKNVLGRINESLVQSIDNLEHFDEITVDVVNGYHNASVYNAIRSVWLKQLRPFLPLIDQMAIQQYFAQRKSSETEKMSIWARLWENLSVWMYGKKKLNECYAMEPKCVRHALELLNFEQRIDLDLAAYENKFDSVDGIIRERLGENRKSSELDEWLHRNRPPKALQAILDERSDIEEEALQRLRDNGVLSSLKHYYKAVIESRSHEEQEDIRHFFDIMNDTFARCFDPLRGQYHDF</sequence>
<gene>
    <name evidence="1" type="ORF">F22B7.1</name>
</gene>
<evidence type="ECO:0000312" key="1">
    <source>
        <dbReference type="WormBase" id="F22B7.1"/>
    </source>
</evidence>
<protein>
    <recommendedName>
        <fullName>Uncharacterized protein F22B7.1</fullName>
    </recommendedName>
</protein>
<accession>P34404</accession>
<feature type="chain" id="PRO_0000065306" description="Uncharacterized protein F22B7.1">
    <location>
        <begin position="1"/>
        <end position="353"/>
    </location>
</feature>